<gene>
    <name type="ORF">FV3-057R</name>
</gene>
<organismHost>
    <name type="scientific">Dryophytes versicolor</name>
    <name type="common">chameleon treefrog</name>
    <dbReference type="NCBI Taxonomy" id="30343"/>
</organismHost>
<organismHost>
    <name type="scientific">Lithobates pipiens</name>
    <name type="common">Northern leopard frog</name>
    <name type="synonym">Rana pipiens</name>
    <dbReference type="NCBI Taxonomy" id="8404"/>
</organismHost>
<organismHost>
    <name type="scientific">Lithobates sylvaticus</name>
    <name type="common">Wood frog</name>
    <name type="synonym">Rana sylvatica</name>
    <dbReference type="NCBI Taxonomy" id="45438"/>
</organismHost>
<organismHost>
    <name type="scientific">Notophthalmus viridescens</name>
    <name type="common">Eastern newt</name>
    <name type="synonym">Triturus viridescens</name>
    <dbReference type="NCBI Taxonomy" id="8316"/>
</organismHost>
<keyword id="KW-1185">Reference proteome</keyword>
<keyword id="KW-0808">Transferase</keyword>
<sequence>MAMVSNVKYFADALQGTQGKVGTFTVLGENVFFKRGDGTDTVCGLEMVAGRILRARSDVHFCEPKYFVEMDDGEKVCSFELLDCKPLGSMAPGRKGKKSVGSVTQYLSGLYQTFAAAAAAHSVGVVHSDLHTGNVMLCPEPVSHYVYNLGGGEMLSLETNGVRAVVVDLGMARIPGKNTVACDIFVHVGHVVNGRPDYAADVRTLTLGSCYDMVMMCASGKPSLEERMLCYEVMAAYNNLFAGVCAPSKGGWFVDHYPSMCAVMEATIPDSVASRGGGSWLLAVANMCKLLVPRPYVKRACGKEKAHAMWMTLFTELGLTAKKSISKVDMVDAVQRLRAIADGSEIPPASLMKAACAVGLLTASVAEACYEKVEEIKASHVGMLRWKDALDAWVRLPVRCSGSVPKLGSTVILHTESGTEETVVTQSMLRQIVKTREALDMAQAASDAVWTDTAYYEADDELMKGAHEESAEDFATSFLKGGTTGPIAKRCRLILKSL</sequence>
<accession>Q6GZR8</accession>
<feature type="chain" id="PRO_0000410527" description="Putative phosphotransferase 057R">
    <location>
        <begin position="1"/>
        <end position="498"/>
    </location>
</feature>
<organism>
    <name type="scientific">Frog virus 3 (isolate Goorha)</name>
    <name type="common">FV-3</name>
    <dbReference type="NCBI Taxonomy" id="654924"/>
    <lineage>
        <taxon>Viruses</taxon>
        <taxon>Varidnaviria</taxon>
        <taxon>Bamfordvirae</taxon>
        <taxon>Nucleocytoviricota</taxon>
        <taxon>Megaviricetes</taxon>
        <taxon>Pimascovirales</taxon>
        <taxon>Iridoviridae</taxon>
        <taxon>Alphairidovirinae</taxon>
        <taxon>Ranavirus</taxon>
        <taxon>Frog virus 3</taxon>
    </lineage>
</organism>
<reference key="1">
    <citation type="journal article" date="2004" name="Virology">
        <title>Comparative genomic analyses of frog virus 3, type species of the genus Ranavirus (family Iridoviridae).</title>
        <authorList>
            <person name="Tan W.G."/>
            <person name="Barkman T.J."/>
            <person name="Gregory Chinchar V."/>
            <person name="Essani K."/>
        </authorList>
    </citation>
    <scope>NUCLEOTIDE SEQUENCE [LARGE SCALE GENOMIC DNA]</scope>
</reference>
<dbReference type="EMBL" id="AY548484">
    <property type="protein sequence ID" value="AAT09717.1"/>
    <property type="molecule type" value="Genomic_DNA"/>
</dbReference>
<dbReference type="RefSeq" id="YP_031636.1">
    <property type="nucleotide sequence ID" value="NC_005946.1"/>
</dbReference>
<dbReference type="KEGG" id="vg:2947757"/>
<dbReference type="Proteomes" id="UP000008770">
    <property type="component" value="Segment"/>
</dbReference>
<dbReference type="GO" id="GO:0016740">
    <property type="term" value="F:transferase activity"/>
    <property type="evidence" value="ECO:0007669"/>
    <property type="project" value="UniProtKB-KW"/>
</dbReference>
<dbReference type="Gene3D" id="1.10.510.10">
    <property type="entry name" value="Transferase(Phosphotransferase) domain 1"/>
    <property type="match status" value="1"/>
</dbReference>
<dbReference type="InterPro" id="IPR011009">
    <property type="entry name" value="Kinase-like_dom_sf"/>
</dbReference>
<dbReference type="SUPFAM" id="SSF56112">
    <property type="entry name" value="Protein kinase-like (PK-like)"/>
    <property type="match status" value="1"/>
</dbReference>
<proteinExistence type="predicted"/>
<name>057R_FRG3G</name>
<protein>
    <recommendedName>
        <fullName>Putative phosphotransferase 057R</fullName>
    </recommendedName>
</protein>